<dbReference type="EC" id="6.2.1.5" evidence="1"/>
<dbReference type="EMBL" id="CP000561">
    <property type="protein sequence ID" value="ABO09074.1"/>
    <property type="molecule type" value="Genomic_DNA"/>
</dbReference>
<dbReference type="RefSeq" id="WP_011850333.1">
    <property type="nucleotide sequence ID" value="NC_009073.1"/>
</dbReference>
<dbReference type="SMR" id="A3MWQ7"/>
<dbReference type="STRING" id="410359.Pcal_1657"/>
<dbReference type="GeneID" id="4908779"/>
<dbReference type="KEGG" id="pcl:Pcal_1657"/>
<dbReference type="eggNOG" id="arCOG01337">
    <property type="taxonomic scope" value="Archaea"/>
</dbReference>
<dbReference type="HOGENOM" id="CLU_037430_0_2_2"/>
<dbReference type="OrthoDB" id="146449at2157"/>
<dbReference type="UniPathway" id="UPA00223">
    <property type="reaction ID" value="UER00999"/>
</dbReference>
<dbReference type="Proteomes" id="UP000001431">
    <property type="component" value="Chromosome"/>
</dbReference>
<dbReference type="GO" id="GO:0042709">
    <property type="term" value="C:succinate-CoA ligase complex"/>
    <property type="evidence" value="ECO:0007669"/>
    <property type="project" value="TreeGrafter"/>
</dbReference>
<dbReference type="GO" id="GO:0005524">
    <property type="term" value="F:ATP binding"/>
    <property type="evidence" value="ECO:0007669"/>
    <property type="project" value="UniProtKB-UniRule"/>
</dbReference>
<dbReference type="GO" id="GO:0000287">
    <property type="term" value="F:magnesium ion binding"/>
    <property type="evidence" value="ECO:0007669"/>
    <property type="project" value="UniProtKB-UniRule"/>
</dbReference>
<dbReference type="GO" id="GO:0004775">
    <property type="term" value="F:succinate-CoA ligase (ADP-forming) activity"/>
    <property type="evidence" value="ECO:0007669"/>
    <property type="project" value="UniProtKB-UniRule"/>
</dbReference>
<dbReference type="GO" id="GO:0004776">
    <property type="term" value="F:succinate-CoA ligase (GDP-forming) activity"/>
    <property type="evidence" value="ECO:0007669"/>
    <property type="project" value="RHEA"/>
</dbReference>
<dbReference type="GO" id="GO:0006104">
    <property type="term" value="P:succinyl-CoA metabolic process"/>
    <property type="evidence" value="ECO:0007669"/>
    <property type="project" value="TreeGrafter"/>
</dbReference>
<dbReference type="GO" id="GO:0006099">
    <property type="term" value="P:tricarboxylic acid cycle"/>
    <property type="evidence" value="ECO:0007669"/>
    <property type="project" value="UniProtKB-UniRule"/>
</dbReference>
<dbReference type="FunFam" id="3.30.470.20:FF:000002">
    <property type="entry name" value="Succinate--CoA ligase [ADP-forming] subunit beta"/>
    <property type="match status" value="1"/>
</dbReference>
<dbReference type="FunFam" id="3.40.50.261:FF:000007">
    <property type="entry name" value="Succinate--CoA ligase [ADP-forming] subunit beta"/>
    <property type="match status" value="1"/>
</dbReference>
<dbReference type="Gene3D" id="3.30.1490.20">
    <property type="entry name" value="ATP-grasp fold, A domain"/>
    <property type="match status" value="1"/>
</dbReference>
<dbReference type="Gene3D" id="3.30.470.20">
    <property type="entry name" value="ATP-grasp fold, B domain"/>
    <property type="match status" value="1"/>
</dbReference>
<dbReference type="Gene3D" id="3.40.50.261">
    <property type="entry name" value="Succinyl-CoA synthetase domains"/>
    <property type="match status" value="1"/>
</dbReference>
<dbReference type="HAMAP" id="MF_00558">
    <property type="entry name" value="Succ_CoA_beta"/>
    <property type="match status" value="1"/>
</dbReference>
<dbReference type="InterPro" id="IPR011761">
    <property type="entry name" value="ATP-grasp"/>
</dbReference>
<dbReference type="InterPro" id="IPR013650">
    <property type="entry name" value="ATP-grasp_succ-CoA_synth-type"/>
</dbReference>
<dbReference type="InterPro" id="IPR013815">
    <property type="entry name" value="ATP_grasp_subdomain_1"/>
</dbReference>
<dbReference type="InterPro" id="IPR017866">
    <property type="entry name" value="Succ-CoA_synthase_bsu_CS"/>
</dbReference>
<dbReference type="InterPro" id="IPR005811">
    <property type="entry name" value="SUCC_ACL_C"/>
</dbReference>
<dbReference type="InterPro" id="IPR005809">
    <property type="entry name" value="Succ_CoA_ligase-like_bsu"/>
</dbReference>
<dbReference type="InterPro" id="IPR016102">
    <property type="entry name" value="Succinyl-CoA_synth-like"/>
</dbReference>
<dbReference type="NCBIfam" id="NF001913">
    <property type="entry name" value="PRK00696.1"/>
    <property type="match status" value="1"/>
</dbReference>
<dbReference type="NCBIfam" id="TIGR01016">
    <property type="entry name" value="sucCoAbeta"/>
    <property type="match status" value="1"/>
</dbReference>
<dbReference type="PANTHER" id="PTHR11815:SF10">
    <property type="entry name" value="SUCCINATE--COA LIGASE [GDP-FORMING] SUBUNIT BETA, MITOCHONDRIAL"/>
    <property type="match status" value="1"/>
</dbReference>
<dbReference type="PANTHER" id="PTHR11815">
    <property type="entry name" value="SUCCINYL-COA SYNTHETASE BETA CHAIN"/>
    <property type="match status" value="1"/>
</dbReference>
<dbReference type="Pfam" id="PF08442">
    <property type="entry name" value="ATP-grasp_2"/>
    <property type="match status" value="1"/>
</dbReference>
<dbReference type="Pfam" id="PF00549">
    <property type="entry name" value="Ligase_CoA"/>
    <property type="match status" value="1"/>
</dbReference>
<dbReference type="PIRSF" id="PIRSF001554">
    <property type="entry name" value="SucCS_beta"/>
    <property type="match status" value="1"/>
</dbReference>
<dbReference type="SUPFAM" id="SSF56059">
    <property type="entry name" value="Glutathione synthetase ATP-binding domain-like"/>
    <property type="match status" value="1"/>
</dbReference>
<dbReference type="SUPFAM" id="SSF52210">
    <property type="entry name" value="Succinyl-CoA synthetase domains"/>
    <property type="match status" value="1"/>
</dbReference>
<dbReference type="PROSITE" id="PS50975">
    <property type="entry name" value="ATP_GRASP"/>
    <property type="match status" value="1"/>
</dbReference>
<dbReference type="PROSITE" id="PS01217">
    <property type="entry name" value="SUCCINYL_COA_LIG_3"/>
    <property type="match status" value="1"/>
</dbReference>
<organism>
    <name type="scientific">Pyrobaculum calidifontis (strain DSM 21063 / JCM 11548 / VA1)</name>
    <dbReference type="NCBI Taxonomy" id="410359"/>
    <lineage>
        <taxon>Archaea</taxon>
        <taxon>Thermoproteota</taxon>
        <taxon>Thermoprotei</taxon>
        <taxon>Thermoproteales</taxon>
        <taxon>Thermoproteaceae</taxon>
        <taxon>Pyrobaculum</taxon>
    </lineage>
</organism>
<sequence>MKLHEYEAKELFAKYGVKIPPGRLALTPEEVRKAAEEMGPPVVLKAQVVVAGRGKAGGIKVAKRVEEAYELSKQMFGMNIKGLTVRKLYVTKYLEVEREMYLSLIIDRATRRFLFLASPVGGMDIEEIAKTTPEKIKRVYVDPFVGLRDYHVRSIVSWLGFSPGTAQWQQAASIVQAMYKIAVDYDAELVESNPLALTKEGDVVPLDARVIVDDNALFRHPELEKALEEDPRDITEFEAYAKKIGFHYVELDGDIGIIGNGAGLTMATMDLVYHFGGRPANFLDIGGGASREVVREAVKVLLNHPRAKVIFINIFGGITRADEVAYGVKEALQAAGGTTKKIVVRMKGTNEELGRAILAEIGVPLFESAEEAAKKAVELAKL</sequence>
<comment type="function">
    <text evidence="1">Succinyl-CoA synthetase functions in the citric acid cycle (TCA), coupling the hydrolysis of succinyl-CoA to the synthesis of either ATP or GTP and thus represents the only step of substrate-level phosphorylation in the TCA. The beta subunit provides nucleotide specificity of the enzyme and binds the substrate succinate, while the binding sites for coenzyme A and phosphate are found in the alpha subunit.</text>
</comment>
<comment type="catalytic activity">
    <reaction evidence="1">
        <text>succinate + ATP + CoA = succinyl-CoA + ADP + phosphate</text>
        <dbReference type="Rhea" id="RHEA:17661"/>
        <dbReference type="ChEBI" id="CHEBI:30031"/>
        <dbReference type="ChEBI" id="CHEBI:30616"/>
        <dbReference type="ChEBI" id="CHEBI:43474"/>
        <dbReference type="ChEBI" id="CHEBI:57287"/>
        <dbReference type="ChEBI" id="CHEBI:57292"/>
        <dbReference type="ChEBI" id="CHEBI:456216"/>
        <dbReference type="EC" id="6.2.1.5"/>
    </reaction>
    <physiologicalReaction direction="right-to-left" evidence="1">
        <dbReference type="Rhea" id="RHEA:17663"/>
    </physiologicalReaction>
</comment>
<comment type="catalytic activity">
    <reaction evidence="1">
        <text>GTP + succinate + CoA = succinyl-CoA + GDP + phosphate</text>
        <dbReference type="Rhea" id="RHEA:22120"/>
        <dbReference type="ChEBI" id="CHEBI:30031"/>
        <dbReference type="ChEBI" id="CHEBI:37565"/>
        <dbReference type="ChEBI" id="CHEBI:43474"/>
        <dbReference type="ChEBI" id="CHEBI:57287"/>
        <dbReference type="ChEBI" id="CHEBI:57292"/>
        <dbReference type="ChEBI" id="CHEBI:58189"/>
    </reaction>
    <physiologicalReaction direction="right-to-left" evidence="1">
        <dbReference type="Rhea" id="RHEA:22122"/>
    </physiologicalReaction>
</comment>
<comment type="cofactor">
    <cofactor evidence="1">
        <name>Mg(2+)</name>
        <dbReference type="ChEBI" id="CHEBI:18420"/>
    </cofactor>
    <text evidence="1">Binds 1 Mg(2+) ion per subunit.</text>
</comment>
<comment type="pathway">
    <text evidence="1">Carbohydrate metabolism; tricarboxylic acid cycle; succinate from succinyl-CoA (ligase route): step 1/1.</text>
</comment>
<comment type="subunit">
    <text evidence="1">Heterotetramer of two alpha and two beta subunits.</text>
</comment>
<comment type="similarity">
    <text evidence="1">Belongs to the succinate/malate CoA ligase beta subunit family.</text>
</comment>
<feature type="chain" id="PRO_1000082181" description="Succinate--CoA ligase [ADP-forming] subunit beta">
    <location>
        <begin position="1"/>
        <end position="382"/>
    </location>
</feature>
<feature type="domain" description="ATP-grasp" evidence="1">
    <location>
        <begin position="9"/>
        <end position="240"/>
    </location>
</feature>
<feature type="binding site" evidence="1">
    <location>
        <position position="45"/>
    </location>
    <ligand>
        <name>ATP</name>
        <dbReference type="ChEBI" id="CHEBI:30616"/>
    </ligand>
</feature>
<feature type="binding site" evidence="1">
    <location>
        <begin position="52"/>
        <end position="54"/>
    </location>
    <ligand>
        <name>ATP</name>
        <dbReference type="ChEBI" id="CHEBI:30616"/>
    </ligand>
</feature>
<feature type="binding site" evidence="1">
    <location>
        <position position="94"/>
    </location>
    <ligand>
        <name>ATP</name>
        <dbReference type="ChEBI" id="CHEBI:30616"/>
    </ligand>
</feature>
<feature type="binding site" evidence="1">
    <location>
        <position position="99"/>
    </location>
    <ligand>
        <name>ATP</name>
        <dbReference type="ChEBI" id="CHEBI:30616"/>
    </ligand>
</feature>
<feature type="binding site" evidence="1">
    <location>
        <position position="193"/>
    </location>
    <ligand>
        <name>Mg(2+)</name>
        <dbReference type="ChEBI" id="CHEBI:18420"/>
    </ligand>
</feature>
<feature type="binding site" evidence="1">
    <location>
        <position position="207"/>
    </location>
    <ligand>
        <name>Mg(2+)</name>
        <dbReference type="ChEBI" id="CHEBI:18420"/>
    </ligand>
</feature>
<feature type="binding site" evidence="1">
    <location>
        <position position="260"/>
    </location>
    <ligand>
        <name>substrate</name>
        <note>ligand shared with subunit alpha</note>
    </ligand>
</feature>
<feature type="binding site" evidence="1">
    <location>
        <begin position="317"/>
        <end position="319"/>
    </location>
    <ligand>
        <name>substrate</name>
        <note>ligand shared with subunit alpha</note>
    </ligand>
</feature>
<accession>A3MWQ7</accession>
<name>SUCC_PYRCJ</name>
<evidence type="ECO:0000255" key="1">
    <source>
        <dbReference type="HAMAP-Rule" id="MF_00558"/>
    </source>
</evidence>
<gene>
    <name evidence="1" type="primary">sucC</name>
    <name type="ordered locus">Pcal_1657</name>
</gene>
<proteinExistence type="inferred from homology"/>
<reference key="1">
    <citation type="submission" date="2007-02" db="EMBL/GenBank/DDBJ databases">
        <title>Complete sequence of Pyrobaculum calidifontis JCM 11548.</title>
        <authorList>
            <consortium name="US DOE Joint Genome Institute"/>
            <person name="Copeland A."/>
            <person name="Lucas S."/>
            <person name="Lapidus A."/>
            <person name="Barry K."/>
            <person name="Glavina del Rio T."/>
            <person name="Dalin E."/>
            <person name="Tice H."/>
            <person name="Pitluck S."/>
            <person name="Chain P."/>
            <person name="Malfatti S."/>
            <person name="Shin M."/>
            <person name="Vergez L."/>
            <person name="Schmutz J."/>
            <person name="Larimer F."/>
            <person name="Land M."/>
            <person name="Hauser L."/>
            <person name="Kyrpides N."/>
            <person name="Mikhailova N."/>
            <person name="Cozen A.E."/>
            <person name="Fitz-Gibbon S.T."/>
            <person name="House C.H."/>
            <person name="Saltikov C."/>
            <person name="Lowe T.M."/>
            <person name="Richardson P."/>
        </authorList>
    </citation>
    <scope>NUCLEOTIDE SEQUENCE [LARGE SCALE GENOMIC DNA]</scope>
    <source>
        <strain>DSM 21063 / JCM 11548 / VA1</strain>
    </source>
</reference>
<keyword id="KW-0067">ATP-binding</keyword>
<keyword id="KW-0436">Ligase</keyword>
<keyword id="KW-0460">Magnesium</keyword>
<keyword id="KW-0479">Metal-binding</keyword>
<keyword id="KW-0547">Nucleotide-binding</keyword>
<keyword id="KW-0816">Tricarboxylic acid cycle</keyword>
<protein>
    <recommendedName>
        <fullName evidence="1">Succinate--CoA ligase [ADP-forming] subunit beta</fullName>
        <ecNumber evidence="1">6.2.1.5</ecNumber>
    </recommendedName>
    <alternativeName>
        <fullName evidence="1">Succinyl-CoA synthetase subunit beta</fullName>
        <shortName evidence="1">SCS-beta</shortName>
    </alternativeName>
</protein>